<feature type="chain" id="PRO_0000229221" description="Ribosome maturation factor RimP">
    <location>
        <begin position="1"/>
        <end position="155"/>
    </location>
</feature>
<gene>
    <name evidence="1" type="primary">rimP</name>
    <name type="ordered locus">BF0217</name>
</gene>
<evidence type="ECO:0000255" key="1">
    <source>
        <dbReference type="HAMAP-Rule" id="MF_01077"/>
    </source>
</evidence>
<name>RIMP_BACFN</name>
<reference key="1">
    <citation type="journal article" date="2005" name="Science">
        <title>Extensive DNA inversions in the B. fragilis genome control variable gene expression.</title>
        <authorList>
            <person name="Cerdeno-Tarraga A.-M."/>
            <person name="Patrick S."/>
            <person name="Crossman L.C."/>
            <person name="Blakely G."/>
            <person name="Abratt V."/>
            <person name="Lennard N."/>
            <person name="Poxton I."/>
            <person name="Duerden B."/>
            <person name="Harris B."/>
            <person name="Quail M.A."/>
            <person name="Barron A."/>
            <person name="Clark L."/>
            <person name="Corton C."/>
            <person name="Doggett J."/>
            <person name="Holden M.T.G."/>
            <person name="Larke N."/>
            <person name="Line A."/>
            <person name="Lord A."/>
            <person name="Norbertczak H."/>
            <person name="Ormond D."/>
            <person name="Price C."/>
            <person name="Rabbinowitsch E."/>
            <person name="Woodward J."/>
            <person name="Barrell B.G."/>
            <person name="Parkhill J."/>
        </authorList>
    </citation>
    <scope>NUCLEOTIDE SEQUENCE [LARGE SCALE GENOMIC DNA]</scope>
    <source>
        <strain>ATCC 25285 / DSM 2151 / CCUG 4856 / JCM 11019 / LMG 10263 / NCTC 9343 / Onslow / VPI 2553 / EN-2</strain>
    </source>
</reference>
<comment type="function">
    <text evidence="1">Required for maturation of 30S ribosomal subunits.</text>
</comment>
<comment type="subcellular location">
    <subcellularLocation>
        <location evidence="1">Cytoplasm</location>
    </subcellularLocation>
</comment>
<comment type="similarity">
    <text evidence="1">Belongs to the RimP family.</text>
</comment>
<sequence>MIEKRTVCQIVEEWLEDKDYFLVEVTVSPDDKIVVEIDHAEGVWIEDCVELSRFIESKLNREEEDYELEVGSAGIGQPFKVLQQYYNHIGLEVEVLTKGGRKLSGVLKDADEEKFVVTVQKKVKPEGAKRPQLVEEDETFTYDDIKYTKYLISFK</sequence>
<proteinExistence type="inferred from homology"/>
<keyword id="KW-0963">Cytoplasm</keyword>
<keyword id="KW-0690">Ribosome biogenesis</keyword>
<accession>Q5LIN3</accession>
<dbReference type="EMBL" id="CR626927">
    <property type="protein sequence ID" value="CAH05993.1"/>
    <property type="molecule type" value="Genomic_DNA"/>
</dbReference>
<dbReference type="RefSeq" id="WP_005783918.1">
    <property type="nucleotide sequence ID" value="NZ_UFTH01000001.1"/>
</dbReference>
<dbReference type="SMR" id="Q5LIN3"/>
<dbReference type="PaxDb" id="272559-BF9343_0214"/>
<dbReference type="GeneID" id="60368348"/>
<dbReference type="KEGG" id="bfs:BF9343_0214"/>
<dbReference type="eggNOG" id="COG0779">
    <property type="taxonomic scope" value="Bacteria"/>
</dbReference>
<dbReference type="HOGENOM" id="CLU_070525_3_1_10"/>
<dbReference type="Proteomes" id="UP000006731">
    <property type="component" value="Chromosome"/>
</dbReference>
<dbReference type="GO" id="GO:0005829">
    <property type="term" value="C:cytosol"/>
    <property type="evidence" value="ECO:0007669"/>
    <property type="project" value="TreeGrafter"/>
</dbReference>
<dbReference type="GO" id="GO:0000028">
    <property type="term" value="P:ribosomal small subunit assembly"/>
    <property type="evidence" value="ECO:0007669"/>
    <property type="project" value="TreeGrafter"/>
</dbReference>
<dbReference type="GO" id="GO:0006412">
    <property type="term" value="P:translation"/>
    <property type="evidence" value="ECO:0007669"/>
    <property type="project" value="TreeGrafter"/>
</dbReference>
<dbReference type="FunFam" id="3.30.300.70:FF:000004">
    <property type="entry name" value="Ribosome maturation factor RimP"/>
    <property type="match status" value="1"/>
</dbReference>
<dbReference type="Gene3D" id="3.30.300.70">
    <property type="entry name" value="RimP-like superfamily, N-terminal"/>
    <property type="match status" value="1"/>
</dbReference>
<dbReference type="HAMAP" id="MF_01077">
    <property type="entry name" value="RimP"/>
    <property type="match status" value="1"/>
</dbReference>
<dbReference type="InterPro" id="IPR003728">
    <property type="entry name" value="Ribosome_maturation_RimP"/>
</dbReference>
<dbReference type="InterPro" id="IPR028998">
    <property type="entry name" value="RimP_C"/>
</dbReference>
<dbReference type="InterPro" id="IPR028989">
    <property type="entry name" value="RimP_N"/>
</dbReference>
<dbReference type="InterPro" id="IPR035956">
    <property type="entry name" value="RimP_N_sf"/>
</dbReference>
<dbReference type="NCBIfam" id="NF002531">
    <property type="entry name" value="PRK02001.1"/>
    <property type="match status" value="1"/>
</dbReference>
<dbReference type="PANTHER" id="PTHR33867">
    <property type="entry name" value="RIBOSOME MATURATION FACTOR RIMP"/>
    <property type="match status" value="1"/>
</dbReference>
<dbReference type="PANTHER" id="PTHR33867:SF1">
    <property type="entry name" value="RIBOSOME MATURATION FACTOR RIMP"/>
    <property type="match status" value="1"/>
</dbReference>
<dbReference type="Pfam" id="PF17384">
    <property type="entry name" value="DUF150_C"/>
    <property type="match status" value="1"/>
</dbReference>
<dbReference type="Pfam" id="PF02576">
    <property type="entry name" value="RimP_N"/>
    <property type="match status" value="1"/>
</dbReference>
<dbReference type="SUPFAM" id="SSF75420">
    <property type="entry name" value="YhbC-like, N-terminal domain"/>
    <property type="match status" value="1"/>
</dbReference>
<protein>
    <recommendedName>
        <fullName evidence="1">Ribosome maturation factor RimP</fullName>
    </recommendedName>
</protein>
<organism>
    <name type="scientific">Bacteroides fragilis (strain ATCC 25285 / DSM 2151 / CCUG 4856 / JCM 11019 / LMG 10263 / NCTC 9343 / Onslow / VPI 2553 / EN-2)</name>
    <dbReference type="NCBI Taxonomy" id="272559"/>
    <lineage>
        <taxon>Bacteria</taxon>
        <taxon>Pseudomonadati</taxon>
        <taxon>Bacteroidota</taxon>
        <taxon>Bacteroidia</taxon>
        <taxon>Bacteroidales</taxon>
        <taxon>Bacteroidaceae</taxon>
        <taxon>Bacteroides</taxon>
    </lineage>
</organism>